<evidence type="ECO:0000250" key="1"/>
<evidence type="ECO:0000269" key="2">
    <source>
    </source>
</evidence>
<evidence type="ECO:0000269" key="3">
    <source>
    </source>
</evidence>
<evidence type="ECO:0000305" key="4"/>
<gene>
    <name type="primary">INM2</name>
    <name type="synonym">IMP2</name>
    <name type="ordered locus">YDR287W</name>
</gene>
<dbReference type="EC" id="3.1.3.25"/>
<dbReference type="EMBL" id="U51031">
    <property type="protein sequence ID" value="AAB64472.1"/>
    <property type="molecule type" value="Genomic_DNA"/>
</dbReference>
<dbReference type="EMBL" id="AY557746">
    <property type="protein sequence ID" value="AAS56072.1"/>
    <property type="molecule type" value="Genomic_DNA"/>
</dbReference>
<dbReference type="EMBL" id="BK006938">
    <property type="protein sequence ID" value="DAA12127.1"/>
    <property type="molecule type" value="Genomic_DNA"/>
</dbReference>
<dbReference type="PIR" id="S70117">
    <property type="entry name" value="S70117"/>
</dbReference>
<dbReference type="RefSeq" id="NP_010573.3">
    <property type="nucleotide sequence ID" value="NM_001180595.3"/>
</dbReference>
<dbReference type="SMR" id="Q05533"/>
<dbReference type="BioGRID" id="32340">
    <property type="interactions" value="59"/>
</dbReference>
<dbReference type="DIP" id="DIP-5626N"/>
<dbReference type="FunCoup" id="Q05533">
    <property type="interactions" value="376"/>
</dbReference>
<dbReference type="MINT" id="Q05533"/>
<dbReference type="STRING" id="4932.YDR287W"/>
<dbReference type="iPTMnet" id="Q05533"/>
<dbReference type="PaxDb" id="4932-YDR287W"/>
<dbReference type="PeptideAtlas" id="Q05533"/>
<dbReference type="EnsemblFungi" id="YDR287W_mRNA">
    <property type="protein sequence ID" value="YDR287W"/>
    <property type="gene ID" value="YDR287W"/>
</dbReference>
<dbReference type="GeneID" id="851881"/>
<dbReference type="KEGG" id="sce:YDR287W"/>
<dbReference type="AGR" id="SGD:S000002695"/>
<dbReference type="SGD" id="S000002695">
    <property type="gene designation" value="INM2"/>
</dbReference>
<dbReference type="VEuPathDB" id="FungiDB:YDR287W"/>
<dbReference type="eggNOG" id="KOG2951">
    <property type="taxonomic scope" value="Eukaryota"/>
</dbReference>
<dbReference type="GeneTree" id="ENSGT00940000169763"/>
<dbReference type="HOGENOM" id="CLU_044118_1_2_1"/>
<dbReference type="InParanoid" id="Q05533"/>
<dbReference type="OMA" id="ERGLHPW"/>
<dbReference type="OrthoDB" id="10254945at2759"/>
<dbReference type="BioCyc" id="YEAST:G3O-29851-MONOMER"/>
<dbReference type="Reactome" id="R-SCE-1855183">
    <property type="pathway name" value="Synthesis of IP2, IP, and Ins in the cytosol"/>
</dbReference>
<dbReference type="SABIO-RK" id="Q05533"/>
<dbReference type="UniPathway" id="UPA00823">
    <property type="reaction ID" value="UER00788"/>
</dbReference>
<dbReference type="BioGRID-ORCS" id="851881">
    <property type="hits" value="2 hits in 10 CRISPR screens"/>
</dbReference>
<dbReference type="PRO" id="PR:Q05533"/>
<dbReference type="Proteomes" id="UP000002311">
    <property type="component" value="Chromosome IV"/>
</dbReference>
<dbReference type="RNAct" id="Q05533">
    <property type="molecule type" value="protein"/>
</dbReference>
<dbReference type="GO" id="GO:0008934">
    <property type="term" value="F:inositol monophosphate 1-phosphatase activity"/>
    <property type="evidence" value="ECO:0000314"/>
    <property type="project" value="SGD"/>
</dbReference>
<dbReference type="GO" id="GO:0046872">
    <property type="term" value="F:metal ion binding"/>
    <property type="evidence" value="ECO:0007669"/>
    <property type="project" value="UniProtKB-KW"/>
</dbReference>
<dbReference type="GO" id="GO:0006021">
    <property type="term" value="P:inositol biosynthetic process"/>
    <property type="evidence" value="ECO:0007669"/>
    <property type="project" value="UniProtKB-UniPathway"/>
</dbReference>
<dbReference type="GO" id="GO:0006020">
    <property type="term" value="P:inositol metabolic process"/>
    <property type="evidence" value="ECO:0000318"/>
    <property type="project" value="GO_Central"/>
</dbReference>
<dbReference type="GO" id="GO:0071545">
    <property type="term" value="P:inositol phosphate catabolic process"/>
    <property type="evidence" value="ECO:0000314"/>
    <property type="project" value="SGD"/>
</dbReference>
<dbReference type="GO" id="GO:0046854">
    <property type="term" value="P:phosphatidylinositol phosphate biosynthetic process"/>
    <property type="evidence" value="ECO:0007669"/>
    <property type="project" value="InterPro"/>
</dbReference>
<dbReference type="GO" id="GO:0007165">
    <property type="term" value="P:signal transduction"/>
    <property type="evidence" value="ECO:0000318"/>
    <property type="project" value="GO_Central"/>
</dbReference>
<dbReference type="CDD" id="cd01639">
    <property type="entry name" value="IMPase"/>
    <property type="match status" value="1"/>
</dbReference>
<dbReference type="FunFam" id="3.30.540.10:FF:000013">
    <property type="entry name" value="Inositol-1-monophosphatase"/>
    <property type="match status" value="1"/>
</dbReference>
<dbReference type="FunFam" id="3.40.190.80:FF:000012">
    <property type="entry name" value="Inositol-1-monophosphatase"/>
    <property type="match status" value="1"/>
</dbReference>
<dbReference type="Gene3D" id="3.40.190.80">
    <property type="match status" value="1"/>
</dbReference>
<dbReference type="Gene3D" id="3.30.540.10">
    <property type="entry name" value="Fructose-1,6-Bisphosphatase, subunit A, domain 1"/>
    <property type="match status" value="1"/>
</dbReference>
<dbReference type="InterPro" id="IPR033942">
    <property type="entry name" value="IMPase"/>
</dbReference>
<dbReference type="InterPro" id="IPR020583">
    <property type="entry name" value="Inositol_monoP_metal-BS"/>
</dbReference>
<dbReference type="InterPro" id="IPR000760">
    <property type="entry name" value="Inositol_monophosphatase-like"/>
</dbReference>
<dbReference type="InterPro" id="IPR020550">
    <property type="entry name" value="Inositol_monophosphatase_CS"/>
</dbReference>
<dbReference type="PANTHER" id="PTHR20854">
    <property type="entry name" value="INOSITOL MONOPHOSPHATASE"/>
    <property type="match status" value="1"/>
</dbReference>
<dbReference type="PANTHER" id="PTHR20854:SF4">
    <property type="entry name" value="INOSITOL-1-MONOPHOSPHATASE-RELATED"/>
    <property type="match status" value="1"/>
</dbReference>
<dbReference type="Pfam" id="PF00459">
    <property type="entry name" value="Inositol_P"/>
    <property type="match status" value="1"/>
</dbReference>
<dbReference type="PRINTS" id="PR00377">
    <property type="entry name" value="IMPHPHTASES"/>
</dbReference>
<dbReference type="SUPFAM" id="SSF56655">
    <property type="entry name" value="Carbohydrate phosphatase"/>
    <property type="match status" value="1"/>
</dbReference>
<dbReference type="PROSITE" id="PS00629">
    <property type="entry name" value="IMP_1"/>
    <property type="match status" value="1"/>
</dbReference>
<dbReference type="PROSITE" id="PS00630">
    <property type="entry name" value="IMP_2"/>
    <property type="match status" value="1"/>
</dbReference>
<proteinExistence type="evidence at protein level"/>
<keyword id="KW-0378">Hydrolase</keyword>
<keyword id="KW-0452">Lithium</keyword>
<keyword id="KW-0460">Magnesium</keyword>
<keyword id="KW-0479">Metal-binding</keyword>
<keyword id="KW-1185">Reference proteome</keyword>
<feature type="chain" id="PRO_0000245568" description="Inositol monophosphatase 2">
    <location>
        <begin position="1"/>
        <end position="292"/>
    </location>
</feature>
<feature type="binding site" evidence="1">
    <location>
        <position position="75"/>
    </location>
    <ligand>
        <name>Mg(2+)</name>
        <dbReference type="ChEBI" id="CHEBI:18420"/>
        <label>1</label>
    </ligand>
</feature>
<feature type="binding site" evidence="1">
    <location>
        <position position="75"/>
    </location>
    <ligand>
        <name>substrate</name>
    </ligand>
</feature>
<feature type="binding site" evidence="1">
    <location>
        <position position="94"/>
    </location>
    <ligand>
        <name>Mg(2+)</name>
        <dbReference type="ChEBI" id="CHEBI:18420"/>
        <label>1</label>
    </ligand>
</feature>
<feature type="binding site" evidence="1">
    <location>
        <position position="94"/>
    </location>
    <ligand>
        <name>Mg(2+)</name>
        <dbReference type="ChEBI" id="CHEBI:18420"/>
        <label>2</label>
    </ligand>
</feature>
<feature type="binding site" evidence="1">
    <location>
        <begin position="96"/>
        <end position="99"/>
    </location>
    <ligand>
        <name>substrate</name>
    </ligand>
</feature>
<feature type="binding site" evidence="1">
    <location>
        <position position="96"/>
    </location>
    <ligand>
        <name>Mg(2+)</name>
        <dbReference type="ChEBI" id="CHEBI:18420"/>
        <label>1</label>
    </ligand>
</feature>
<feature type="binding site" evidence="1">
    <location>
        <position position="97"/>
    </location>
    <ligand>
        <name>Mg(2+)</name>
        <dbReference type="ChEBI" id="CHEBI:18420"/>
        <label>2</label>
    </ligand>
</feature>
<feature type="binding site" evidence="1">
    <location>
        <position position="231"/>
    </location>
    <ligand>
        <name>Mg(2+)</name>
        <dbReference type="ChEBI" id="CHEBI:18420"/>
        <label>2</label>
    </ligand>
</feature>
<feature type="binding site" evidence="1">
    <location>
        <position position="231"/>
    </location>
    <ligand>
        <name>substrate</name>
    </ligand>
</feature>
<name>INM2_YEAST</name>
<reference key="1">
    <citation type="journal article" date="1997" name="Nature">
        <title>The nucleotide sequence of Saccharomyces cerevisiae chromosome IV.</title>
        <authorList>
            <person name="Jacq C."/>
            <person name="Alt-Moerbe J."/>
            <person name="Andre B."/>
            <person name="Arnold W."/>
            <person name="Bahr A."/>
            <person name="Ballesta J.P.G."/>
            <person name="Bargues M."/>
            <person name="Baron L."/>
            <person name="Becker A."/>
            <person name="Biteau N."/>
            <person name="Bloecker H."/>
            <person name="Blugeon C."/>
            <person name="Boskovic J."/>
            <person name="Brandt P."/>
            <person name="Brueckner M."/>
            <person name="Buitrago M.J."/>
            <person name="Coster F."/>
            <person name="Delaveau T."/>
            <person name="del Rey F."/>
            <person name="Dujon B."/>
            <person name="Eide L.G."/>
            <person name="Garcia-Cantalejo J.M."/>
            <person name="Goffeau A."/>
            <person name="Gomez-Peris A."/>
            <person name="Granotier C."/>
            <person name="Hanemann V."/>
            <person name="Hankeln T."/>
            <person name="Hoheisel J.D."/>
            <person name="Jaeger W."/>
            <person name="Jimenez A."/>
            <person name="Jonniaux J.-L."/>
            <person name="Kraemer C."/>
            <person name="Kuester H."/>
            <person name="Laamanen P."/>
            <person name="Legros Y."/>
            <person name="Louis E.J."/>
            <person name="Moeller-Rieker S."/>
            <person name="Monnet A."/>
            <person name="Moro M."/>
            <person name="Mueller-Auer S."/>
            <person name="Nussbaumer B."/>
            <person name="Paricio N."/>
            <person name="Paulin L."/>
            <person name="Perea J."/>
            <person name="Perez-Alonso M."/>
            <person name="Perez-Ortin J.E."/>
            <person name="Pohl T.M."/>
            <person name="Prydz H."/>
            <person name="Purnelle B."/>
            <person name="Rasmussen S.W."/>
            <person name="Remacha M.A."/>
            <person name="Revuelta J.L."/>
            <person name="Rieger M."/>
            <person name="Salom D."/>
            <person name="Saluz H.P."/>
            <person name="Saiz J.E."/>
            <person name="Saren A.-M."/>
            <person name="Schaefer M."/>
            <person name="Scharfe M."/>
            <person name="Schmidt E.R."/>
            <person name="Schneider C."/>
            <person name="Scholler P."/>
            <person name="Schwarz S."/>
            <person name="Soler-Mira A."/>
            <person name="Urrestarazu L.A."/>
            <person name="Verhasselt P."/>
            <person name="Vissers S."/>
            <person name="Voet M."/>
            <person name="Volckaert G."/>
            <person name="Wagner G."/>
            <person name="Wambutt R."/>
            <person name="Wedler E."/>
            <person name="Wedler H."/>
            <person name="Woelfl S."/>
            <person name="Harris D.E."/>
            <person name="Bowman S."/>
            <person name="Brown D."/>
            <person name="Churcher C.M."/>
            <person name="Connor R."/>
            <person name="Dedman K."/>
            <person name="Gentles S."/>
            <person name="Hamlin N."/>
            <person name="Hunt S."/>
            <person name="Jones L."/>
            <person name="McDonald S."/>
            <person name="Murphy L.D."/>
            <person name="Niblett D."/>
            <person name="Odell C."/>
            <person name="Oliver K."/>
            <person name="Rajandream M.A."/>
            <person name="Richards C."/>
            <person name="Shore L."/>
            <person name="Walsh S.V."/>
            <person name="Barrell B.G."/>
            <person name="Dietrich F.S."/>
            <person name="Mulligan J.T."/>
            <person name="Allen E."/>
            <person name="Araujo R."/>
            <person name="Aviles E."/>
            <person name="Berno A."/>
            <person name="Carpenter J."/>
            <person name="Chen E."/>
            <person name="Cherry J.M."/>
            <person name="Chung E."/>
            <person name="Duncan M."/>
            <person name="Hunicke-Smith S."/>
            <person name="Hyman R.W."/>
            <person name="Komp C."/>
            <person name="Lashkari D."/>
            <person name="Lew H."/>
            <person name="Lin D."/>
            <person name="Mosedale D."/>
            <person name="Nakahara K."/>
            <person name="Namath A."/>
            <person name="Oefner P."/>
            <person name="Oh C."/>
            <person name="Petel F.X."/>
            <person name="Roberts D."/>
            <person name="Schramm S."/>
            <person name="Schroeder M."/>
            <person name="Shogren T."/>
            <person name="Shroff N."/>
            <person name="Winant A."/>
            <person name="Yelton M.A."/>
            <person name="Botstein D."/>
            <person name="Davis R.W."/>
            <person name="Johnston M."/>
            <person name="Andrews S."/>
            <person name="Brinkman R."/>
            <person name="Cooper J."/>
            <person name="Ding H."/>
            <person name="Du Z."/>
            <person name="Favello A."/>
            <person name="Fulton L."/>
            <person name="Gattung S."/>
            <person name="Greco T."/>
            <person name="Hallsworth K."/>
            <person name="Hawkins J."/>
            <person name="Hillier L.W."/>
            <person name="Jier M."/>
            <person name="Johnson D."/>
            <person name="Johnston L."/>
            <person name="Kirsten J."/>
            <person name="Kucaba T."/>
            <person name="Langston Y."/>
            <person name="Latreille P."/>
            <person name="Le T."/>
            <person name="Mardis E."/>
            <person name="Menezes S."/>
            <person name="Miller N."/>
            <person name="Nhan M."/>
            <person name="Pauley A."/>
            <person name="Peluso D."/>
            <person name="Rifkin L."/>
            <person name="Riles L."/>
            <person name="Taich A."/>
            <person name="Trevaskis E."/>
            <person name="Vignati D."/>
            <person name="Wilcox L."/>
            <person name="Wohldman P."/>
            <person name="Vaudin M."/>
            <person name="Wilson R."/>
            <person name="Waterston R."/>
            <person name="Albermann K."/>
            <person name="Hani J."/>
            <person name="Heumann K."/>
            <person name="Kleine K."/>
            <person name="Mewes H.-W."/>
            <person name="Zollner A."/>
            <person name="Zaccaria P."/>
        </authorList>
    </citation>
    <scope>NUCLEOTIDE SEQUENCE [LARGE SCALE GENOMIC DNA]</scope>
    <source>
        <strain>ATCC 204508 / S288c</strain>
    </source>
</reference>
<reference key="2">
    <citation type="journal article" date="2014" name="G3 (Bethesda)">
        <title>The reference genome sequence of Saccharomyces cerevisiae: Then and now.</title>
        <authorList>
            <person name="Engel S.R."/>
            <person name="Dietrich F.S."/>
            <person name="Fisk D.G."/>
            <person name="Binkley G."/>
            <person name="Balakrishnan R."/>
            <person name="Costanzo M.C."/>
            <person name="Dwight S.S."/>
            <person name="Hitz B.C."/>
            <person name="Karra K."/>
            <person name="Nash R.S."/>
            <person name="Weng S."/>
            <person name="Wong E.D."/>
            <person name="Lloyd P."/>
            <person name="Skrzypek M.S."/>
            <person name="Miyasato S.R."/>
            <person name="Simison M."/>
            <person name="Cherry J.M."/>
        </authorList>
    </citation>
    <scope>GENOME REANNOTATION</scope>
    <source>
        <strain>ATCC 204508 / S288c</strain>
    </source>
</reference>
<reference key="3">
    <citation type="journal article" date="2007" name="Genome Res.">
        <title>Approaching a complete repository of sequence-verified protein-encoding clones for Saccharomyces cerevisiae.</title>
        <authorList>
            <person name="Hu Y."/>
            <person name="Rolfs A."/>
            <person name="Bhullar B."/>
            <person name="Murthy T.V.S."/>
            <person name="Zhu C."/>
            <person name="Berger M.F."/>
            <person name="Camargo A.A."/>
            <person name="Kelley F."/>
            <person name="McCarron S."/>
            <person name="Jepson D."/>
            <person name="Richardson A."/>
            <person name="Raphael J."/>
            <person name="Moreira D."/>
            <person name="Taycher E."/>
            <person name="Zuo D."/>
            <person name="Mohr S."/>
            <person name="Kane M.F."/>
            <person name="Williamson J."/>
            <person name="Simpson A.J.G."/>
            <person name="Bulyk M.L."/>
            <person name="Harlow E."/>
            <person name="Marsischky G."/>
            <person name="Kolodner R.D."/>
            <person name="LaBaer J."/>
        </authorList>
    </citation>
    <scope>NUCLEOTIDE SEQUENCE [GENOMIC DNA]</scope>
    <source>
        <strain>ATCC 204508 / S288c</strain>
    </source>
</reference>
<reference key="4">
    <citation type="journal article" date="1999" name="Mol. Microbiol.">
        <title>The yeast inositol monophosphatase is a lithium- and sodium-sensitive enzyme encoded by a non-essential gene pair.</title>
        <authorList>
            <person name="Lopez F."/>
            <person name="Leube M."/>
            <person name="Gil-Mascarell R."/>
            <person name="Navarro-Avino J.P."/>
            <person name="Serrano R."/>
        </authorList>
    </citation>
    <scope>FUNCTION</scope>
    <scope>ACTIVITY REGULATION</scope>
    <scope>BIOPHYSICOCHEMICAL PROPERTIES</scope>
</reference>
<reference key="5">
    <citation type="journal article" date="2003" name="Biochem. Biophys. Res. Commun.">
        <title>Yeast inositol mono- and trisphosphate levels are modulated by inositol monophosphatase activity and nutrients.</title>
        <authorList>
            <person name="Navarro-Avino J.P."/>
            <person name="Belles J.M."/>
            <person name="Serrano R."/>
        </authorList>
    </citation>
    <scope>FUNCTION</scope>
</reference>
<organism>
    <name type="scientific">Saccharomyces cerevisiae (strain ATCC 204508 / S288c)</name>
    <name type="common">Baker's yeast</name>
    <dbReference type="NCBI Taxonomy" id="559292"/>
    <lineage>
        <taxon>Eukaryota</taxon>
        <taxon>Fungi</taxon>
        <taxon>Dikarya</taxon>
        <taxon>Ascomycota</taxon>
        <taxon>Saccharomycotina</taxon>
        <taxon>Saccharomycetes</taxon>
        <taxon>Saccharomycetales</taxon>
        <taxon>Saccharomycetaceae</taxon>
        <taxon>Saccharomyces</taxon>
    </lineage>
</organism>
<protein>
    <recommendedName>
        <fullName>Inositol monophosphatase 2</fullName>
        <shortName>IMP 2</shortName>
        <shortName>IMPase 2</shortName>
        <ecNumber>3.1.3.25</ecNumber>
    </recommendedName>
    <alternativeName>
        <fullName>Inositol-1(or 4)-monophosphatase 2</fullName>
    </alternativeName>
</protein>
<sequence>MVLTRQVLEEVENTFIELLRSKIGPLVKSHAGTNFCSYDDKANGVDLVTALDKQIESIIKENLTAKYPSFKFIGEETYVKGVTKITNGPTFIVDPIDGTTNFIHGYPYSCTSLGLAEMGKPVVGVVFNPHLNQLFHASKGNGAFLNDQEIKVSKRPLILQKSLIALEGGSERTEGSQGNFDKKMNTYKNLLSESGAFVHGFRSAGSAAMNICYVASGMLDAYWEGGCWAWDVCAGWCILEEAGGIMVGGNCGEWNIPLDRRCYLAIRGGCESMEQKRFAESFWPHVAGELEY</sequence>
<accession>Q05533</accession>
<accession>D6VSR7</accession>
<comment type="function">
    <text evidence="2 3">Responsible for the provision of inositol required for synthesis of phosphatidylinositol and polyphosphoinositides and involved in the inositol cycle of calcium signaling.</text>
</comment>
<comment type="catalytic activity">
    <reaction>
        <text>a myo-inositol phosphate + H2O = myo-inositol + phosphate</text>
        <dbReference type="Rhea" id="RHEA:24056"/>
        <dbReference type="ChEBI" id="CHEBI:15377"/>
        <dbReference type="ChEBI" id="CHEBI:17268"/>
        <dbReference type="ChEBI" id="CHEBI:43474"/>
        <dbReference type="ChEBI" id="CHEBI:84139"/>
        <dbReference type="EC" id="3.1.3.25"/>
    </reaction>
</comment>
<comment type="cofactor">
    <cofactor>
        <name>Mg(2+)</name>
        <dbReference type="ChEBI" id="CHEBI:18420"/>
    </cofactor>
</comment>
<comment type="activity regulation">
    <text evidence="2">Inhibited by Li(+) and Na(+).</text>
</comment>
<comment type="biophysicochemical properties">
    <kinetics>
        <KM evidence="2">0.12 mM for inositol 1-phosphate</KM>
        <Vmax evidence="2">16.0 umol/min/mg enzyme for inositol 1-phosphate</Vmax>
    </kinetics>
</comment>
<comment type="pathway">
    <text>Polyol metabolism; myo-inositol biosynthesis; myo-inositol from D-glucose 6-phosphate: step 2/2.</text>
</comment>
<comment type="similarity">
    <text evidence="4">Belongs to the inositol monophosphatase superfamily.</text>
</comment>